<feature type="chain" id="PRO_1000214003" description="Probable GTP 3',8-cyclase">
    <location>
        <begin position="1"/>
        <end position="308"/>
    </location>
</feature>
<feature type="domain" description="Radical SAM core" evidence="2">
    <location>
        <begin position="4"/>
        <end position="224"/>
    </location>
</feature>
<feature type="binding site" evidence="1">
    <location>
        <position position="13"/>
    </location>
    <ligand>
        <name>GTP</name>
        <dbReference type="ChEBI" id="CHEBI:37565"/>
    </ligand>
</feature>
<feature type="binding site" evidence="1">
    <location>
        <position position="20"/>
    </location>
    <ligand>
        <name>[4Fe-4S] cluster</name>
        <dbReference type="ChEBI" id="CHEBI:49883"/>
        <label>1</label>
        <note>4Fe-4S-S-AdoMet</note>
    </ligand>
</feature>
<feature type="binding site" evidence="1">
    <location>
        <position position="24"/>
    </location>
    <ligand>
        <name>[4Fe-4S] cluster</name>
        <dbReference type="ChEBI" id="CHEBI:49883"/>
        <label>1</label>
        <note>4Fe-4S-S-AdoMet</note>
    </ligand>
</feature>
<feature type="binding site" evidence="1">
    <location>
        <position position="27"/>
    </location>
    <ligand>
        <name>[4Fe-4S] cluster</name>
        <dbReference type="ChEBI" id="CHEBI:49883"/>
        <label>1</label>
        <note>4Fe-4S-S-AdoMet</note>
    </ligand>
</feature>
<feature type="binding site" evidence="1">
    <location>
        <position position="60"/>
    </location>
    <ligand>
        <name>GTP</name>
        <dbReference type="ChEBI" id="CHEBI:37565"/>
    </ligand>
</feature>
<feature type="binding site" evidence="1">
    <location>
        <position position="64"/>
    </location>
    <ligand>
        <name>S-adenosyl-L-methionine</name>
        <dbReference type="ChEBI" id="CHEBI:59789"/>
    </ligand>
</feature>
<feature type="binding site" evidence="1">
    <location>
        <position position="90"/>
    </location>
    <ligand>
        <name>GTP</name>
        <dbReference type="ChEBI" id="CHEBI:37565"/>
    </ligand>
</feature>
<feature type="binding site" evidence="1">
    <location>
        <position position="114"/>
    </location>
    <ligand>
        <name>S-adenosyl-L-methionine</name>
        <dbReference type="ChEBI" id="CHEBI:59789"/>
    </ligand>
</feature>
<feature type="binding site" evidence="1">
    <location>
        <position position="151"/>
    </location>
    <ligand>
        <name>GTP</name>
        <dbReference type="ChEBI" id="CHEBI:37565"/>
    </ligand>
</feature>
<feature type="binding site" evidence="1">
    <location>
        <position position="245"/>
    </location>
    <ligand>
        <name>[4Fe-4S] cluster</name>
        <dbReference type="ChEBI" id="CHEBI:49883"/>
        <label>2</label>
        <note>4Fe-4S-substrate</note>
    </ligand>
</feature>
<feature type="binding site" evidence="1">
    <location>
        <position position="248"/>
    </location>
    <ligand>
        <name>[4Fe-4S] cluster</name>
        <dbReference type="ChEBI" id="CHEBI:49883"/>
        <label>2</label>
        <note>4Fe-4S-substrate</note>
    </ligand>
</feature>
<feature type="binding site" evidence="1">
    <location>
        <begin position="250"/>
        <end position="252"/>
    </location>
    <ligand>
        <name>GTP</name>
        <dbReference type="ChEBI" id="CHEBI:37565"/>
    </ligand>
</feature>
<feature type="binding site" evidence="1">
    <location>
        <position position="262"/>
    </location>
    <ligand>
        <name>[4Fe-4S] cluster</name>
        <dbReference type="ChEBI" id="CHEBI:49883"/>
        <label>2</label>
        <note>4Fe-4S-substrate</note>
    </ligand>
</feature>
<dbReference type="EC" id="4.1.99.22" evidence="1"/>
<dbReference type="EMBL" id="CP001400">
    <property type="protein sequence ID" value="ACP38487.1"/>
    <property type="molecule type" value="Genomic_DNA"/>
</dbReference>
<dbReference type="RefSeq" id="WP_012711718.1">
    <property type="nucleotide sequence ID" value="NC_012588.1"/>
</dbReference>
<dbReference type="SMR" id="C3MXF3"/>
<dbReference type="GeneID" id="84062093"/>
<dbReference type="KEGG" id="sia:M1425_1741"/>
<dbReference type="HOGENOM" id="CLU_009273_0_1_2"/>
<dbReference type="UniPathway" id="UPA00344"/>
<dbReference type="Proteomes" id="UP000001350">
    <property type="component" value="Chromosome"/>
</dbReference>
<dbReference type="GO" id="GO:0051539">
    <property type="term" value="F:4 iron, 4 sulfur cluster binding"/>
    <property type="evidence" value="ECO:0007669"/>
    <property type="project" value="UniProtKB-UniRule"/>
</dbReference>
<dbReference type="GO" id="GO:0061799">
    <property type="term" value="F:cyclic pyranopterin monophosphate synthase activity"/>
    <property type="evidence" value="ECO:0007669"/>
    <property type="project" value="TreeGrafter"/>
</dbReference>
<dbReference type="GO" id="GO:0061798">
    <property type="term" value="F:GTP 3',8'-cyclase activity"/>
    <property type="evidence" value="ECO:0007669"/>
    <property type="project" value="UniProtKB-UniRule"/>
</dbReference>
<dbReference type="GO" id="GO:0005525">
    <property type="term" value="F:GTP binding"/>
    <property type="evidence" value="ECO:0007669"/>
    <property type="project" value="UniProtKB-UniRule"/>
</dbReference>
<dbReference type="GO" id="GO:0046872">
    <property type="term" value="F:metal ion binding"/>
    <property type="evidence" value="ECO:0007669"/>
    <property type="project" value="UniProtKB-KW"/>
</dbReference>
<dbReference type="GO" id="GO:1904047">
    <property type="term" value="F:S-adenosyl-L-methionine binding"/>
    <property type="evidence" value="ECO:0007669"/>
    <property type="project" value="UniProtKB-UniRule"/>
</dbReference>
<dbReference type="GO" id="GO:0006777">
    <property type="term" value="P:Mo-molybdopterin cofactor biosynthetic process"/>
    <property type="evidence" value="ECO:0007669"/>
    <property type="project" value="UniProtKB-UniRule"/>
</dbReference>
<dbReference type="CDD" id="cd01335">
    <property type="entry name" value="Radical_SAM"/>
    <property type="match status" value="1"/>
</dbReference>
<dbReference type="CDD" id="cd21117">
    <property type="entry name" value="Twitch_MoaA"/>
    <property type="match status" value="1"/>
</dbReference>
<dbReference type="Gene3D" id="3.20.20.70">
    <property type="entry name" value="Aldolase class I"/>
    <property type="match status" value="1"/>
</dbReference>
<dbReference type="HAMAP" id="MF_01225_A">
    <property type="entry name" value="MoaA_A"/>
    <property type="match status" value="1"/>
</dbReference>
<dbReference type="InterPro" id="IPR013785">
    <property type="entry name" value="Aldolase_TIM"/>
</dbReference>
<dbReference type="InterPro" id="IPR006638">
    <property type="entry name" value="Elp3/MiaA/NifB-like_rSAM"/>
</dbReference>
<dbReference type="InterPro" id="IPR013485">
    <property type="entry name" value="MoaA_arc"/>
</dbReference>
<dbReference type="InterPro" id="IPR010505">
    <property type="entry name" value="MoaA_twitch"/>
</dbReference>
<dbReference type="InterPro" id="IPR050105">
    <property type="entry name" value="MoCo_biosynth_MoaA/MoaC"/>
</dbReference>
<dbReference type="InterPro" id="IPR007197">
    <property type="entry name" value="rSAM"/>
</dbReference>
<dbReference type="NCBIfam" id="TIGR02668">
    <property type="entry name" value="moaA_archaeal"/>
    <property type="match status" value="1"/>
</dbReference>
<dbReference type="NCBIfam" id="NF001199">
    <property type="entry name" value="PRK00164.2-1"/>
    <property type="match status" value="1"/>
</dbReference>
<dbReference type="PANTHER" id="PTHR22960:SF0">
    <property type="entry name" value="MOLYBDENUM COFACTOR BIOSYNTHESIS PROTEIN 1"/>
    <property type="match status" value="1"/>
</dbReference>
<dbReference type="PANTHER" id="PTHR22960">
    <property type="entry name" value="MOLYBDOPTERIN COFACTOR SYNTHESIS PROTEIN A"/>
    <property type="match status" value="1"/>
</dbReference>
<dbReference type="Pfam" id="PF06463">
    <property type="entry name" value="Mob_synth_C"/>
    <property type="match status" value="1"/>
</dbReference>
<dbReference type="Pfam" id="PF04055">
    <property type="entry name" value="Radical_SAM"/>
    <property type="match status" value="1"/>
</dbReference>
<dbReference type="SFLD" id="SFLDG01383">
    <property type="entry name" value="cyclic_pyranopterin_phosphate"/>
    <property type="match status" value="1"/>
</dbReference>
<dbReference type="SFLD" id="SFLDG01216">
    <property type="entry name" value="thioether_bond_formation_requi"/>
    <property type="match status" value="1"/>
</dbReference>
<dbReference type="SMART" id="SM00729">
    <property type="entry name" value="Elp3"/>
    <property type="match status" value="1"/>
</dbReference>
<dbReference type="SUPFAM" id="SSF102114">
    <property type="entry name" value="Radical SAM enzymes"/>
    <property type="match status" value="1"/>
</dbReference>
<dbReference type="PROSITE" id="PS51918">
    <property type="entry name" value="RADICAL_SAM"/>
    <property type="match status" value="1"/>
</dbReference>
<protein>
    <recommendedName>
        <fullName evidence="1">Probable GTP 3',8-cyclase</fullName>
        <ecNumber evidence="1">4.1.99.22</ecNumber>
    </recommendedName>
    <alternativeName>
        <fullName evidence="1">Molybdenum cofactor biosynthesis protein A</fullName>
    </alternativeName>
</protein>
<comment type="function">
    <text evidence="1">Catalyzes the cyclization of GTP to (8S)-3',8-cyclo-7,8-dihydroguanosine 5'-triphosphate.</text>
</comment>
<comment type="catalytic activity">
    <reaction evidence="1">
        <text>GTP + AH2 + S-adenosyl-L-methionine = (8S)-3',8-cyclo-7,8-dihydroguanosine 5'-triphosphate + 5'-deoxyadenosine + L-methionine + A + H(+)</text>
        <dbReference type="Rhea" id="RHEA:49576"/>
        <dbReference type="ChEBI" id="CHEBI:13193"/>
        <dbReference type="ChEBI" id="CHEBI:15378"/>
        <dbReference type="ChEBI" id="CHEBI:17319"/>
        <dbReference type="ChEBI" id="CHEBI:17499"/>
        <dbReference type="ChEBI" id="CHEBI:37565"/>
        <dbReference type="ChEBI" id="CHEBI:57844"/>
        <dbReference type="ChEBI" id="CHEBI:59789"/>
        <dbReference type="ChEBI" id="CHEBI:131766"/>
        <dbReference type="EC" id="4.1.99.22"/>
    </reaction>
</comment>
<comment type="cofactor">
    <cofactor evidence="1">
        <name>[4Fe-4S] cluster</name>
        <dbReference type="ChEBI" id="CHEBI:49883"/>
    </cofactor>
    <text evidence="1">Binds 2 [4Fe-4S] clusters. Binds 1 [4Fe-4S] cluster coordinated with 3 cysteines and an exchangeable S-adenosyl-L-methionine and 1 [4Fe-4S] cluster coordinated with 3 cysteines and the GTP-derived substrate.</text>
</comment>
<comment type="pathway">
    <text evidence="1">Cofactor biosynthesis; molybdopterin biosynthesis.</text>
</comment>
<comment type="similarity">
    <text evidence="1">Belongs to the radical SAM superfamily. MoaA family.</text>
</comment>
<reference key="1">
    <citation type="journal article" date="2009" name="Proc. Natl. Acad. Sci. U.S.A.">
        <title>Biogeography of the Sulfolobus islandicus pan-genome.</title>
        <authorList>
            <person name="Reno M.L."/>
            <person name="Held N.L."/>
            <person name="Fields C.J."/>
            <person name="Burke P.V."/>
            <person name="Whitaker R.J."/>
        </authorList>
    </citation>
    <scope>NUCLEOTIDE SEQUENCE [LARGE SCALE GENOMIC DNA]</scope>
    <source>
        <strain>M.14.25 / Kamchatka #1</strain>
    </source>
</reference>
<keyword id="KW-0004">4Fe-4S</keyword>
<keyword id="KW-0342">GTP-binding</keyword>
<keyword id="KW-0408">Iron</keyword>
<keyword id="KW-0411">Iron-sulfur</keyword>
<keyword id="KW-0456">Lyase</keyword>
<keyword id="KW-0479">Metal-binding</keyword>
<keyword id="KW-0501">Molybdenum cofactor biosynthesis</keyword>
<keyword id="KW-0547">Nucleotide-binding</keyword>
<keyword id="KW-0949">S-adenosyl-L-methionine</keyword>
<name>MOAA_SACI4</name>
<sequence>MIDRFGRPLEDLRITLTHVCNFECFFCHMEGEEGDNYILSKEDILLVAKVAKNFGINSVKLTGGEPTLRRDLVEIVRGLKQLGYRDVSMTTNGFLLKDLAYKLKLAGLDRINVSLHAISRETFKKITGVDAFDRVIEGIKSAIDVGLVPVKLNFVVNRRNREEVFKFIELSQNLGVNEIHLIELHPVGLGKLAFKEHDDLREIEEYIEKISIKKQIRKKHFRPRYVLPSGLIVEVVKPYANPIFCAGCNRIRLSVDGKLKTCLYREDNVIDILDILKGEYSEDVKEELLGRAFMIAIAIREPNFKYKI</sequence>
<evidence type="ECO:0000255" key="1">
    <source>
        <dbReference type="HAMAP-Rule" id="MF_01225"/>
    </source>
</evidence>
<evidence type="ECO:0000255" key="2">
    <source>
        <dbReference type="PROSITE-ProRule" id="PRU01266"/>
    </source>
</evidence>
<gene>
    <name evidence="1" type="primary">moaA</name>
    <name type="ordered locus">M1425_1741</name>
</gene>
<proteinExistence type="inferred from homology"/>
<organism>
    <name type="scientific">Saccharolobus islandicus (strain M.14.25 / Kamchatka #1)</name>
    <name type="common">Sulfolobus islandicus</name>
    <dbReference type="NCBI Taxonomy" id="427317"/>
    <lineage>
        <taxon>Archaea</taxon>
        <taxon>Thermoproteota</taxon>
        <taxon>Thermoprotei</taxon>
        <taxon>Sulfolobales</taxon>
        <taxon>Sulfolobaceae</taxon>
        <taxon>Saccharolobus</taxon>
    </lineage>
</organism>
<accession>C3MXF3</accession>